<organism>
    <name type="scientific">Acaryochloris marina (strain MBIC 11017)</name>
    <dbReference type="NCBI Taxonomy" id="329726"/>
    <lineage>
        <taxon>Bacteria</taxon>
        <taxon>Bacillati</taxon>
        <taxon>Cyanobacteriota</taxon>
        <taxon>Cyanophyceae</taxon>
        <taxon>Acaryochloridales</taxon>
        <taxon>Acaryochloridaceae</taxon>
        <taxon>Acaryochloris</taxon>
    </lineage>
</organism>
<gene>
    <name evidence="1" type="primary">petN</name>
    <name type="ordered locus">AM1_6424</name>
</gene>
<protein>
    <recommendedName>
        <fullName evidence="1">Cytochrome b6-f complex subunit 8</fullName>
    </recommendedName>
    <alternativeName>
        <fullName evidence="1">Cytochrome b6-f complex subunit PetN</fullName>
    </alternativeName>
    <alternativeName>
        <fullName evidence="1">Cytochrome b6-f complex subunit VIII</fullName>
    </alternativeName>
</protein>
<sequence>MDILTLGWVSVLTLFTYSIAMVVWGRHGM</sequence>
<evidence type="ECO:0000255" key="1">
    <source>
        <dbReference type="HAMAP-Rule" id="MF_00395"/>
    </source>
</evidence>
<proteinExistence type="inferred from homology"/>
<name>PETN_ACAM1</name>
<feature type="chain" id="PRO_1000080324" description="Cytochrome b6-f complex subunit 8">
    <location>
        <begin position="1"/>
        <end position="29"/>
    </location>
</feature>
<feature type="transmembrane region" description="Helical" evidence="1">
    <location>
        <begin position="3"/>
        <end position="23"/>
    </location>
</feature>
<dbReference type="EMBL" id="CP000828">
    <property type="protein sequence ID" value="ABW31343.1"/>
    <property type="molecule type" value="Genomic_DNA"/>
</dbReference>
<dbReference type="RefSeq" id="WP_010472049.1">
    <property type="nucleotide sequence ID" value="NC_009925.1"/>
</dbReference>
<dbReference type="SMR" id="B0BZ70"/>
<dbReference type="STRING" id="329726.AM1_6424"/>
<dbReference type="KEGG" id="amr:AM1_6424"/>
<dbReference type="HOGENOM" id="CLU_215774_1_0_3"/>
<dbReference type="Proteomes" id="UP000000268">
    <property type="component" value="Chromosome"/>
</dbReference>
<dbReference type="GO" id="GO:0009512">
    <property type="term" value="C:cytochrome b6f complex"/>
    <property type="evidence" value="ECO:0007669"/>
    <property type="project" value="InterPro"/>
</dbReference>
<dbReference type="GO" id="GO:0031676">
    <property type="term" value="C:plasma membrane-derived thylakoid membrane"/>
    <property type="evidence" value="ECO:0007669"/>
    <property type="project" value="UniProtKB-SubCell"/>
</dbReference>
<dbReference type="GO" id="GO:0045158">
    <property type="term" value="F:electron transporter, transferring electrons within cytochrome b6/f complex of photosystem II activity"/>
    <property type="evidence" value="ECO:0007669"/>
    <property type="project" value="InterPro"/>
</dbReference>
<dbReference type="GO" id="GO:0017004">
    <property type="term" value="P:cytochrome complex assembly"/>
    <property type="evidence" value="ECO:0007669"/>
    <property type="project" value="UniProtKB-UniRule"/>
</dbReference>
<dbReference type="GO" id="GO:0015979">
    <property type="term" value="P:photosynthesis"/>
    <property type="evidence" value="ECO:0007669"/>
    <property type="project" value="UniProtKB-KW"/>
</dbReference>
<dbReference type="HAMAP" id="MF_00395">
    <property type="entry name" value="Cytb6_f_PetN"/>
    <property type="match status" value="1"/>
</dbReference>
<dbReference type="InterPro" id="IPR036143">
    <property type="entry name" value="Cytochr_b6-f_cplx_su8_sf"/>
</dbReference>
<dbReference type="InterPro" id="IPR005497">
    <property type="entry name" value="Cytochrome_b6-f_cplx_su8"/>
</dbReference>
<dbReference type="NCBIfam" id="NF011331">
    <property type="entry name" value="PRK14747.1"/>
    <property type="match status" value="1"/>
</dbReference>
<dbReference type="Pfam" id="PF03742">
    <property type="entry name" value="PetN"/>
    <property type="match status" value="1"/>
</dbReference>
<dbReference type="SUPFAM" id="SSF103451">
    <property type="entry name" value="PetN subunit of the cytochrome b6f complex"/>
    <property type="match status" value="1"/>
</dbReference>
<keyword id="KW-0249">Electron transport</keyword>
<keyword id="KW-0472">Membrane</keyword>
<keyword id="KW-0602">Photosynthesis</keyword>
<keyword id="KW-1185">Reference proteome</keyword>
<keyword id="KW-0793">Thylakoid</keyword>
<keyword id="KW-0812">Transmembrane</keyword>
<keyword id="KW-1133">Transmembrane helix</keyword>
<keyword id="KW-0813">Transport</keyword>
<accession>B0BZ70</accession>
<comment type="function">
    <text evidence="1">Component of the cytochrome b6-f complex, which mediates electron transfer between photosystem II (PSII) and photosystem I (PSI), cyclic electron flow around PSI, and state transitions.</text>
</comment>
<comment type="subunit">
    <text evidence="1">The 4 large subunits of the cytochrome b6-f complex are cytochrome b6, subunit IV (17 kDa polypeptide, PetD), cytochrome f and the Rieske protein, while the 4 small subunits are PetG, PetL, PetM and PetN. The complex functions as a dimer.</text>
</comment>
<comment type="subcellular location">
    <subcellularLocation>
        <location evidence="1">Cellular thylakoid membrane</location>
        <topology evidence="1">Single-pass membrane protein</topology>
    </subcellularLocation>
</comment>
<comment type="similarity">
    <text evidence="1">Belongs to the PetN family.</text>
</comment>
<reference key="1">
    <citation type="journal article" date="2008" name="Proc. Natl. Acad. Sci. U.S.A.">
        <title>Niche adaptation and genome expansion in the chlorophyll d-producing cyanobacterium Acaryochloris marina.</title>
        <authorList>
            <person name="Swingley W.D."/>
            <person name="Chen M."/>
            <person name="Cheung P.C."/>
            <person name="Conrad A.L."/>
            <person name="Dejesa L.C."/>
            <person name="Hao J."/>
            <person name="Honchak B.M."/>
            <person name="Karbach L.E."/>
            <person name="Kurdoglu A."/>
            <person name="Lahiri S."/>
            <person name="Mastrian S.D."/>
            <person name="Miyashita H."/>
            <person name="Page L."/>
            <person name="Ramakrishna P."/>
            <person name="Satoh S."/>
            <person name="Sattley W.M."/>
            <person name="Shimada Y."/>
            <person name="Taylor H.L."/>
            <person name="Tomo T."/>
            <person name="Tsuchiya T."/>
            <person name="Wang Z.T."/>
            <person name="Raymond J."/>
            <person name="Mimuro M."/>
            <person name="Blankenship R.E."/>
            <person name="Touchman J.W."/>
        </authorList>
    </citation>
    <scope>NUCLEOTIDE SEQUENCE [LARGE SCALE GENOMIC DNA]</scope>
    <source>
        <strain>MBIC 11017</strain>
    </source>
</reference>